<sequence>MSALKEYYTNECVPALKDQLGYTNPMQIPKIEKIVLNMGLGEAVQNPKIVEGAAEELTKIAGQRAVVTKAKKSIATFKLREGMPIGCRVTLRGEKMYDFLSKLVNIALPRVRDFRGVSPKGFDGRGNYSMGIQEQIIFPEIDYDKIDKIKGFNITIVTSAKTNDEGRSLLRLMGMPFKK</sequence>
<dbReference type="EMBL" id="CR522870">
    <property type="protein sequence ID" value="CAG35865.1"/>
    <property type="molecule type" value="Genomic_DNA"/>
</dbReference>
<dbReference type="RefSeq" id="WP_011188379.1">
    <property type="nucleotide sequence ID" value="NC_006138.1"/>
</dbReference>
<dbReference type="SMR" id="Q6AP59"/>
<dbReference type="STRING" id="177439.DP1136"/>
<dbReference type="KEGG" id="dps:DP1136"/>
<dbReference type="eggNOG" id="COG0094">
    <property type="taxonomic scope" value="Bacteria"/>
</dbReference>
<dbReference type="HOGENOM" id="CLU_061015_2_1_7"/>
<dbReference type="OrthoDB" id="9806626at2"/>
<dbReference type="Proteomes" id="UP000000602">
    <property type="component" value="Chromosome"/>
</dbReference>
<dbReference type="GO" id="GO:1990904">
    <property type="term" value="C:ribonucleoprotein complex"/>
    <property type="evidence" value="ECO:0007669"/>
    <property type="project" value="UniProtKB-KW"/>
</dbReference>
<dbReference type="GO" id="GO:0005840">
    <property type="term" value="C:ribosome"/>
    <property type="evidence" value="ECO:0007669"/>
    <property type="project" value="UniProtKB-KW"/>
</dbReference>
<dbReference type="GO" id="GO:0019843">
    <property type="term" value="F:rRNA binding"/>
    <property type="evidence" value="ECO:0007669"/>
    <property type="project" value="UniProtKB-UniRule"/>
</dbReference>
<dbReference type="GO" id="GO:0003735">
    <property type="term" value="F:structural constituent of ribosome"/>
    <property type="evidence" value="ECO:0007669"/>
    <property type="project" value="InterPro"/>
</dbReference>
<dbReference type="GO" id="GO:0000049">
    <property type="term" value="F:tRNA binding"/>
    <property type="evidence" value="ECO:0007669"/>
    <property type="project" value="UniProtKB-UniRule"/>
</dbReference>
<dbReference type="GO" id="GO:0006412">
    <property type="term" value="P:translation"/>
    <property type="evidence" value="ECO:0007669"/>
    <property type="project" value="UniProtKB-UniRule"/>
</dbReference>
<dbReference type="FunFam" id="3.30.1440.10:FF:000001">
    <property type="entry name" value="50S ribosomal protein L5"/>
    <property type="match status" value="1"/>
</dbReference>
<dbReference type="Gene3D" id="3.30.1440.10">
    <property type="match status" value="1"/>
</dbReference>
<dbReference type="HAMAP" id="MF_01333_B">
    <property type="entry name" value="Ribosomal_uL5_B"/>
    <property type="match status" value="1"/>
</dbReference>
<dbReference type="InterPro" id="IPR002132">
    <property type="entry name" value="Ribosomal_uL5"/>
</dbReference>
<dbReference type="InterPro" id="IPR020930">
    <property type="entry name" value="Ribosomal_uL5_bac-type"/>
</dbReference>
<dbReference type="InterPro" id="IPR031309">
    <property type="entry name" value="Ribosomal_uL5_C"/>
</dbReference>
<dbReference type="InterPro" id="IPR020929">
    <property type="entry name" value="Ribosomal_uL5_CS"/>
</dbReference>
<dbReference type="InterPro" id="IPR022803">
    <property type="entry name" value="Ribosomal_uL5_dom_sf"/>
</dbReference>
<dbReference type="InterPro" id="IPR031310">
    <property type="entry name" value="Ribosomal_uL5_N"/>
</dbReference>
<dbReference type="NCBIfam" id="NF000585">
    <property type="entry name" value="PRK00010.1"/>
    <property type="match status" value="1"/>
</dbReference>
<dbReference type="PANTHER" id="PTHR11994">
    <property type="entry name" value="60S RIBOSOMAL PROTEIN L11-RELATED"/>
    <property type="match status" value="1"/>
</dbReference>
<dbReference type="Pfam" id="PF00281">
    <property type="entry name" value="Ribosomal_L5"/>
    <property type="match status" value="1"/>
</dbReference>
<dbReference type="Pfam" id="PF00673">
    <property type="entry name" value="Ribosomal_L5_C"/>
    <property type="match status" value="1"/>
</dbReference>
<dbReference type="PIRSF" id="PIRSF002161">
    <property type="entry name" value="Ribosomal_L5"/>
    <property type="match status" value="1"/>
</dbReference>
<dbReference type="SUPFAM" id="SSF55282">
    <property type="entry name" value="RL5-like"/>
    <property type="match status" value="1"/>
</dbReference>
<dbReference type="PROSITE" id="PS00358">
    <property type="entry name" value="RIBOSOMAL_L5"/>
    <property type="match status" value="1"/>
</dbReference>
<organism>
    <name type="scientific">Desulfotalea psychrophila (strain LSv54 / DSM 12343)</name>
    <dbReference type="NCBI Taxonomy" id="177439"/>
    <lineage>
        <taxon>Bacteria</taxon>
        <taxon>Pseudomonadati</taxon>
        <taxon>Thermodesulfobacteriota</taxon>
        <taxon>Desulfobulbia</taxon>
        <taxon>Desulfobulbales</taxon>
        <taxon>Desulfocapsaceae</taxon>
        <taxon>Desulfotalea</taxon>
    </lineage>
</organism>
<evidence type="ECO:0000255" key="1">
    <source>
        <dbReference type="HAMAP-Rule" id="MF_01333"/>
    </source>
</evidence>
<evidence type="ECO:0000305" key="2"/>
<name>RL5_DESPS</name>
<protein>
    <recommendedName>
        <fullName evidence="1">Large ribosomal subunit protein uL5</fullName>
    </recommendedName>
    <alternativeName>
        <fullName evidence="2">50S ribosomal protein L5</fullName>
    </alternativeName>
</protein>
<gene>
    <name evidence="1" type="primary">rplE</name>
    <name type="ordered locus">DP1136</name>
</gene>
<proteinExistence type="inferred from homology"/>
<accession>Q6AP59</accession>
<comment type="function">
    <text evidence="1">This is one of the proteins that bind and probably mediate the attachment of the 5S RNA into the large ribosomal subunit, where it forms part of the central protuberance. In the 70S ribosome it contacts protein S13 of the 30S subunit (bridge B1b), connecting the 2 subunits; this bridge is implicated in subunit movement. Contacts the P site tRNA; the 5S rRNA and some of its associated proteins might help stabilize positioning of ribosome-bound tRNAs.</text>
</comment>
<comment type="subunit">
    <text evidence="1">Part of the 50S ribosomal subunit; part of the 5S rRNA/L5/L18/L25 subcomplex. Contacts the 5S rRNA and the P site tRNA. Forms a bridge to the 30S subunit in the 70S ribosome.</text>
</comment>
<comment type="similarity">
    <text evidence="1">Belongs to the universal ribosomal protein uL5 family.</text>
</comment>
<feature type="chain" id="PRO_0000242994" description="Large ribosomal subunit protein uL5">
    <location>
        <begin position="1"/>
        <end position="179"/>
    </location>
</feature>
<reference key="1">
    <citation type="journal article" date="2004" name="Environ. Microbiol.">
        <title>The genome of Desulfotalea psychrophila, a sulfate-reducing bacterium from permanently cold Arctic sediments.</title>
        <authorList>
            <person name="Rabus R."/>
            <person name="Ruepp A."/>
            <person name="Frickey T."/>
            <person name="Rattei T."/>
            <person name="Fartmann B."/>
            <person name="Stark M."/>
            <person name="Bauer M."/>
            <person name="Zibat A."/>
            <person name="Lombardot T."/>
            <person name="Becker I."/>
            <person name="Amann J."/>
            <person name="Gellner K."/>
            <person name="Teeling H."/>
            <person name="Leuschner W.D."/>
            <person name="Gloeckner F.-O."/>
            <person name="Lupas A.N."/>
            <person name="Amann R."/>
            <person name="Klenk H.-P."/>
        </authorList>
    </citation>
    <scope>NUCLEOTIDE SEQUENCE [LARGE SCALE GENOMIC DNA]</scope>
    <source>
        <strain>DSM 12343 / LSv54</strain>
    </source>
</reference>
<keyword id="KW-1185">Reference proteome</keyword>
<keyword id="KW-0687">Ribonucleoprotein</keyword>
<keyword id="KW-0689">Ribosomal protein</keyword>
<keyword id="KW-0694">RNA-binding</keyword>
<keyword id="KW-0699">rRNA-binding</keyword>
<keyword id="KW-0820">tRNA-binding</keyword>